<protein>
    <recommendedName>
        <fullName evidence="1">Small ribosomal subunit protein uS2</fullName>
    </recommendedName>
    <alternativeName>
        <fullName evidence="2">30S ribosomal protein S2</fullName>
    </alternativeName>
</protein>
<proteinExistence type="inferred from homology"/>
<name>RS2_PECCP</name>
<organism>
    <name type="scientific">Pectobacterium carotovorum subsp. carotovorum (strain PC1)</name>
    <dbReference type="NCBI Taxonomy" id="561230"/>
    <lineage>
        <taxon>Bacteria</taxon>
        <taxon>Pseudomonadati</taxon>
        <taxon>Pseudomonadota</taxon>
        <taxon>Gammaproteobacteria</taxon>
        <taxon>Enterobacterales</taxon>
        <taxon>Pectobacteriaceae</taxon>
        <taxon>Pectobacterium</taxon>
    </lineage>
</organism>
<dbReference type="EMBL" id="CP001657">
    <property type="protein sequence ID" value="ACT11991.1"/>
    <property type="molecule type" value="Genomic_DNA"/>
</dbReference>
<dbReference type="RefSeq" id="WP_010284816.1">
    <property type="nucleotide sequence ID" value="NC_012917.1"/>
</dbReference>
<dbReference type="SMR" id="C6DAI3"/>
<dbReference type="STRING" id="561230.PC1_0941"/>
<dbReference type="GeneID" id="90762376"/>
<dbReference type="KEGG" id="pct:PC1_0941"/>
<dbReference type="eggNOG" id="COG0052">
    <property type="taxonomic scope" value="Bacteria"/>
</dbReference>
<dbReference type="HOGENOM" id="CLU_040318_1_2_6"/>
<dbReference type="OrthoDB" id="9808036at2"/>
<dbReference type="Proteomes" id="UP000002736">
    <property type="component" value="Chromosome"/>
</dbReference>
<dbReference type="GO" id="GO:0022627">
    <property type="term" value="C:cytosolic small ribosomal subunit"/>
    <property type="evidence" value="ECO:0007669"/>
    <property type="project" value="TreeGrafter"/>
</dbReference>
<dbReference type="GO" id="GO:0003735">
    <property type="term" value="F:structural constituent of ribosome"/>
    <property type="evidence" value="ECO:0007669"/>
    <property type="project" value="InterPro"/>
</dbReference>
<dbReference type="GO" id="GO:0006412">
    <property type="term" value="P:translation"/>
    <property type="evidence" value="ECO:0007669"/>
    <property type="project" value="UniProtKB-UniRule"/>
</dbReference>
<dbReference type="CDD" id="cd01425">
    <property type="entry name" value="RPS2"/>
    <property type="match status" value="1"/>
</dbReference>
<dbReference type="FunFam" id="1.10.287.610:FF:000001">
    <property type="entry name" value="30S ribosomal protein S2"/>
    <property type="match status" value="1"/>
</dbReference>
<dbReference type="Gene3D" id="3.40.50.10490">
    <property type="entry name" value="Glucose-6-phosphate isomerase like protein, domain 1"/>
    <property type="match status" value="1"/>
</dbReference>
<dbReference type="Gene3D" id="1.10.287.610">
    <property type="entry name" value="Helix hairpin bin"/>
    <property type="match status" value="1"/>
</dbReference>
<dbReference type="HAMAP" id="MF_00291_B">
    <property type="entry name" value="Ribosomal_uS2_B"/>
    <property type="match status" value="1"/>
</dbReference>
<dbReference type="InterPro" id="IPR001865">
    <property type="entry name" value="Ribosomal_uS2"/>
</dbReference>
<dbReference type="InterPro" id="IPR005706">
    <property type="entry name" value="Ribosomal_uS2_bac/mit/plastid"/>
</dbReference>
<dbReference type="InterPro" id="IPR018130">
    <property type="entry name" value="Ribosomal_uS2_CS"/>
</dbReference>
<dbReference type="InterPro" id="IPR023591">
    <property type="entry name" value="Ribosomal_uS2_flav_dom_sf"/>
</dbReference>
<dbReference type="NCBIfam" id="TIGR01011">
    <property type="entry name" value="rpsB_bact"/>
    <property type="match status" value="1"/>
</dbReference>
<dbReference type="PANTHER" id="PTHR12534">
    <property type="entry name" value="30S RIBOSOMAL PROTEIN S2 PROKARYOTIC AND ORGANELLAR"/>
    <property type="match status" value="1"/>
</dbReference>
<dbReference type="PANTHER" id="PTHR12534:SF0">
    <property type="entry name" value="SMALL RIBOSOMAL SUBUNIT PROTEIN US2M"/>
    <property type="match status" value="1"/>
</dbReference>
<dbReference type="Pfam" id="PF00318">
    <property type="entry name" value="Ribosomal_S2"/>
    <property type="match status" value="1"/>
</dbReference>
<dbReference type="PRINTS" id="PR00395">
    <property type="entry name" value="RIBOSOMALS2"/>
</dbReference>
<dbReference type="SUPFAM" id="SSF52313">
    <property type="entry name" value="Ribosomal protein S2"/>
    <property type="match status" value="1"/>
</dbReference>
<dbReference type="PROSITE" id="PS00962">
    <property type="entry name" value="RIBOSOMAL_S2_1"/>
    <property type="match status" value="1"/>
</dbReference>
<dbReference type="PROSITE" id="PS00963">
    <property type="entry name" value="RIBOSOMAL_S2_2"/>
    <property type="match status" value="1"/>
</dbReference>
<reference key="1">
    <citation type="submission" date="2009-07" db="EMBL/GenBank/DDBJ databases">
        <title>Complete sequence of Pectobacterium carotovorum subsp. carotovorum PC1.</title>
        <authorList>
            <consortium name="US DOE Joint Genome Institute"/>
            <person name="Lucas S."/>
            <person name="Copeland A."/>
            <person name="Lapidus A."/>
            <person name="Glavina del Rio T."/>
            <person name="Tice H."/>
            <person name="Bruce D."/>
            <person name="Goodwin L."/>
            <person name="Pitluck S."/>
            <person name="Munk A.C."/>
            <person name="Brettin T."/>
            <person name="Detter J.C."/>
            <person name="Han C."/>
            <person name="Tapia R."/>
            <person name="Larimer F."/>
            <person name="Land M."/>
            <person name="Hauser L."/>
            <person name="Kyrpides N."/>
            <person name="Mikhailova N."/>
            <person name="Balakrishnan V."/>
            <person name="Glasner J."/>
            <person name="Perna N.T."/>
        </authorList>
    </citation>
    <scope>NUCLEOTIDE SEQUENCE [LARGE SCALE GENOMIC DNA]</scope>
    <source>
        <strain>PC1</strain>
    </source>
</reference>
<evidence type="ECO:0000255" key="1">
    <source>
        <dbReference type="HAMAP-Rule" id="MF_00291"/>
    </source>
</evidence>
<evidence type="ECO:0000305" key="2"/>
<sequence length="241" mass="26697">MATVSMRDMLKAGVHFGHQTRYWNPKMKPFIFGARNKVHIINLEKTVPMFNDALAELSKIASRKGKILFVGTKRAASEAVKDAANNCDQFFVNHRWLGGMLTNWKTVRQSIKRLKDLETQSQDGTFDKLTKKEALMRTRELDKLENSLGGIKDMGGLPDALFVIDADHEHIAIKEANNLGIPVFAVVDTNSDPDGVDYIIPGNDDAIRAVSLYLSAVATAVREGRSQDLAVQAEEGLVEAE</sequence>
<accession>C6DAI3</accession>
<keyword id="KW-0687">Ribonucleoprotein</keyword>
<keyword id="KW-0689">Ribosomal protein</keyword>
<feature type="chain" id="PRO_1000204889" description="Small ribosomal subunit protein uS2">
    <location>
        <begin position="1"/>
        <end position="241"/>
    </location>
</feature>
<comment type="similarity">
    <text evidence="1">Belongs to the universal ribosomal protein uS2 family.</text>
</comment>
<gene>
    <name evidence="1" type="primary">rpsB</name>
    <name type="ordered locus">PC1_0941</name>
</gene>